<dbReference type="EMBL" id="CP000777">
    <property type="protein sequence ID" value="ABZ94428.1"/>
    <property type="molecule type" value="Genomic_DNA"/>
</dbReference>
<dbReference type="RefSeq" id="WP_012388949.1">
    <property type="nucleotide sequence ID" value="NC_010842.1"/>
</dbReference>
<dbReference type="SMR" id="B0SAG5"/>
<dbReference type="KEGG" id="lbf:LBF_1924"/>
<dbReference type="HOGENOM" id="CLU_074237_2_0_12"/>
<dbReference type="GO" id="GO:0022625">
    <property type="term" value="C:cytosolic large ribosomal subunit"/>
    <property type="evidence" value="ECO:0007669"/>
    <property type="project" value="TreeGrafter"/>
</dbReference>
<dbReference type="GO" id="GO:0070180">
    <property type="term" value="F:large ribosomal subunit rRNA binding"/>
    <property type="evidence" value="ECO:0007669"/>
    <property type="project" value="UniProtKB-UniRule"/>
</dbReference>
<dbReference type="GO" id="GO:0003735">
    <property type="term" value="F:structural constituent of ribosome"/>
    <property type="evidence" value="ECO:0007669"/>
    <property type="project" value="InterPro"/>
</dbReference>
<dbReference type="GO" id="GO:0006412">
    <property type="term" value="P:translation"/>
    <property type="evidence" value="ECO:0007669"/>
    <property type="project" value="UniProtKB-UniRule"/>
</dbReference>
<dbReference type="CDD" id="cd00349">
    <property type="entry name" value="Ribosomal_L11"/>
    <property type="match status" value="1"/>
</dbReference>
<dbReference type="FunFam" id="1.10.10.250:FF:000001">
    <property type="entry name" value="50S ribosomal protein L11"/>
    <property type="match status" value="1"/>
</dbReference>
<dbReference type="FunFam" id="3.30.1550.10:FF:000001">
    <property type="entry name" value="50S ribosomal protein L11"/>
    <property type="match status" value="1"/>
</dbReference>
<dbReference type="Gene3D" id="1.10.10.250">
    <property type="entry name" value="Ribosomal protein L11, C-terminal domain"/>
    <property type="match status" value="1"/>
</dbReference>
<dbReference type="Gene3D" id="3.30.1550.10">
    <property type="entry name" value="Ribosomal protein L11/L12, N-terminal domain"/>
    <property type="match status" value="1"/>
</dbReference>
<dbReference type="HAMAP" id="MF_00736">
    <property type="entry name" value="Ribosomal_uL11"/>
    <property type="match status" value="1"/>
</dbReference>
<dbReference type="InterPro" id="IPR000911">
    <property type="entry name" value="Ribosomal_uL11"/>
</dbReference>
<dbReference type="InterPro" id="IPR006519">
    <property type="entry name" value="Ribosomal_uL11_bac-typ"/>
</dbReference>
<dbReference type="InterPro" id="IPR020783">
    <property type="entry name" value="Ribosomal_uL11_C"/>
</dbReference>
<dbReference type="InterPro" id="IPR036769">
    <property type="entry name" value="Ribosomal_uL11_C_sf"/>
</dbReference>
<dbReference type="InterPro" id="IPR020785">
    <property type="entry name" value="Ribosomal_uL11_CS"/>
</dbReference>
<dbReference type="InterPro" id="IPR020784">
    <property type="entry name" value="Ribosomal_uL11_N"/>
</dbReference>
<dbReference type="InterPro" id="IPR036796">
    <property type="entry name" value="Ribosomal_uL11_N_sf"/>
</dbReference>
<dbReference type="NCBIfam" id="TIGR01632">
    <property type="entry name" value="L11_bact"/>
    <property type="match status" value="1"/>
</dbReference>
<dbReference type="PANTHER" id="PTHR11661">
    <property type="entry name" value="60S RIBOSOMAL PROTEIN L12"/>
    <property type="match status" value="1"/>
</dbReference>
<dbReference type="PANTHER" id="PTHR11661:SF1">
    <property type="entry name" value="LARGE RIBOSOMAL SUBUNIT PROTEIN UL11M"/>
    <property type="match status" value="1"/>
</dbReference>
<dbReference type="Pfam" id="PF00298">
    <property type="entry name" value="Ribosomal_L11"/>
    <property type="match status" value="1"/>
</dbReference>
<dbReference type="Pfam" id="PF03946">
    <property type="entry name" value="Ribosomal_L11_N"/>
    <property type="match status" value="1"/>
</dbReference>
<dbReference type="SMART" id="SM00649">
    <property type="entry name" value="RL11"/>
    <property type="match status" value="1"/>
</dbReference>
<dbReference type="SUPFAM" id="SSF54747">
    <property type="entry name" value="Ribosomal L11/L12e N-terminal domain"/>
    <property type="match status" value="1"/>
</dbReference>
<dbReference type="SUPFAM" id="SSF46906">
    <property type="entry name" value="Ribosomal protein L11, C-terminal domain"/>
    <property type="match status" value="1"/>
</dbReference>
<dbReference type="PROSITE" id="PS00359">
    <property type="entry name" value="RIBOSOMAL_L11"/>
    <property type="match status" value="1"/>
</dbReference>
<comment type="function">
    <text evidence="1">Forms part of the ribosomal stalk which helps the ribosome interact with GTP-bound translation factors.</text>
</comment>
<comment type="subunit">
    <text evidence="1">Part of the ribosomal stalk of the 50S ribosomal subunit. Interacts with L10 and the large rRNA to form the base of the stalk. L10 forms an elongated spine to which L12 dimers bind in a sequential fashion forming a multimeric L10(L12)X complex.</text>
</comment>
<comment type="PTM">
    <text evidence="1">One or more lysine residues are methylated.</text>
</comment>
<comment type="similarity">
    <text evidence="1">Belongs to the universal ribosomal protein uL11 family.</text>
</comment>
<feature type="chain" id="PRO_1000195660" description="Large ribosomal subunit protein uL11">
    <location>
        <begin position="1"/>
        <end position="141"/>
    </location>
</feature>
<evidence type="ECO:0000255" key="1">
    <source>
        <dbReference type="HAMAP-Rule" id="MF_00736"/>
    </source>
</evidence>
<evidence type="ECO:0000305" key="2"/>
<proteinExistence type="inferred from homology"/>
<organism>
    <name type="scientific">Leptospira biflexa serovar Patoc (strain Patoc 1 / Ames)</name>
    <dbReference type="NCBI Taxonomy" id="355278"/>
    <lineage>
        <taxon>Bacteria</taxon>
        <taxon>Pseudomonadati</taxon>
        <taxon>Spirochaetota</taxon>
        <taxon>Spirochaetia</taxon>
        <taxon>Leptospirales</taxon>
        <taxon>Leptospiraceae</taxon>
        <taxon>Leptospira</taxon>
    </lineage>
</organism>
<keyword id="KW-0488">Methylation</keyword>
<keyword id="KW-0687">Ribonucleoprotein</keyword>
<keyword id="KW-0689">Ribosomal protein</keyword>
<keyword id="KW-0694">RNA-binding</keyword>
<keyword id="KW-0699">rRNA-binding</keyword>
<gene>
    <name evidence="1" type="primary">rplK</name>
    <name type="ordered locus">LBF_1924</name>
</gene>
<name>RL11_LEPBA</name>
<protein>
    <recommendedName>
        <fullName evidence="1">Large ribosomal subunit protein uL11</fullName>
    </recommendedName>
    <alternativeName>
        <fullName evidence="2">50S ribosomal protein L11</fullName>
    </alternativeName>
</protein>
<reference key="1">
    <citation type="journal article" date="2008" name="PLoS ONE">
        <title>Genome sequence of the saprophyte Leptospira biflexa provides insights into the evolution of Leptospira and the pathogenesis of leptospirosis.</title>
        <authorList>
            <person name="Picardeau M."/>
            <person name="Bulach D.M."/>
            <person name="Bouchier C."/>
            <person name="Zuerner R.L."/>
            <person name="Zidane N."/>
            <person name="Wilson P.J."/>
            <person name="Creno S."/>
            <person name="Kuczek E.S."/>
            <person name="Bommezzadri S."/>
            <person name="Davis J.C."/>
            <person name="McGrath A."/>
            <person name="Johnson M.J."/>
            <person name="Boursaux-Eude C."/>
            <person name="Seemann T."/>
            <person name="Rouy Z."/>
            <person name="Coppel R.L."/>
            <person name="Rood J.I."/>
            <person name="Lajus A."/>
            <person name="Davies J.K."/>
            <person name="Medigue C."/>
            <person name="Adler B."/>
        </authorList>
    </citation>
    <scope>NUCLEOTIDE SEQUENCE [LARGE SCALE GENOMIC DNA]</scope>
    <source>
        <strain>Patoc 1 / Ames</strain>
    </source>
</reference>
<accession>B0SAG5</accession>
<sequence>MAAKKVVKQIKLQVEAGKANPAPPVGPALGQAGLNIMEFCKQFNERSKNQMGLKLPVVITVYSDRSFTFVTKSPPAALLVMKALGLQGGSATPHTVKVGTIKRAQLEEIAKTKMEDLNANDMDAAVKIIAGTCRSMGVNVE</sequence>